<protein>
    <recommendedName>
        <fullName evidence="1">Large ribosomal subunit protein uL18</fullName>
    </recommendedName>
    <alternativeName>
        <fullName evidence="2">50S ribosomal protein L18</fullName>
    </alternativeName>
</protein>
<name>RL18_THEAC</name>
<accession>Q9HIS6</accession>
<feature type="chain" id="PRO_0000131420" description="Large ribosomal subunit protein uL18">
    <location>
        <begin position="1"/>
        <end position="163"/>
    </location>
</feature>
<organism>
    <name type="scientific">Thermoplasma acidophilum (strain ATCC 25905 / DSM 1728 / JCM 9062 / NBRC 15155 / AMRC-C165)</name>
    <dbReference type="NCBI Taxonomy" id="273075"/>
    <lineage>
        <taxon>Archaea</taxon>
        <taxon>Methanobacteriati</taxon>
        <taxon>Thermoplasmatota</taxon>
        <taxon>Thermoplasmata</taxon>
        <taxon>Thermoplasmatales</taxon>
        <taxon>Thermoplasmataceae</taxon>
        <taxon>Thermoplasma</taxon>
    </lineage>
</organism>
<gene>
    <name evidence="1" type="primary">rpl18</name>
    <name type="ordered locus">Ta1252</name>
</gene>
<reference key="1">
    <citation type="journal article" date="2000" name="Nature">
        <title>The genome sequence of the thermoacidophilic scavenger Thermoplasma acidophilum.</title>
        <authorList>
            <person name="Ruepp A."/>
            <person name="Graml W."/>
            <person name="Santos-Martinez M.-L."/>
            <person name="Koretke K.K."/>
            <person name="Volker C."/>
            <person name="Mewes H.-W."/>
            <person name="Frishman D."/>
            <person name="Stocker S."/>
            <person name="Lupas A.N."/>
            <person name="Baumeister W."/>
        </authorList>
    </citation>
    <scope>NUCLEOTIDE SEQUENCE [LARGE SCALE GENOMIC DNA]</scope>
    <source>
        <strain>ATCC 25905 / DSM 1728 / JCM 9062 / NBRC 15155 / AMRC-C165</strain>
    </source>
</reference>
<dbReference type="EMBL" id="AL445067">
    <property type="protein sequence ID" value="CAC12376.1"/>
    <property type="molecule type" value="Genomic_DNA"/>
</dbReference>
<dbReference type="SMR" id="Q9HIS6"/>
<dbReference type="FunCoup" id="Q9HIS6">
    <property type="interactions" value="170"/>
</dbReference>
<dbReference type="STRING" id="273075.gene:9572475"/>
<dbReference type="PaxDb" id="273075-Ta1252m"/>
<dbReference type="EnsemblBacteria" id="CAC12376">
    <property type="protein sequence ID" value="CAC12376"/>
    <property type="gene ID" value="CAC12376"/>
</dbReference>
<dbReference type="KEGG" id="tac:Ta1252"/>
<dbReference type="eggNOG" id="arCOG04088">
    <property type="taxonomic scope" value="Archaea"/>
</dbReference>
<dbReference type="HOGENOM" id="CLU_056222_2_1_2"/>
<dbReference type="InParanoid" id="Q9HIS6"/>
<dbReference type="Proteomes" id="UP000001024">
    <property type="component" value="Chromosome"/>
</dbReference>
<dbReference type="GO" id="GO:0022625">
    <property type="term" value="C:cytosolic large ribosomal subunit"/>
    <property type="evidence" value="ECO:0007669"/>
    <property type="project" value="TreeGrafter"/>
</dbReference>
<dbReference type="GO" id="GO:0008097">
    <property type="term" value="F:5S rRNA binding"/>
    <property type="evidence" value="ECO:0007669"/>
    <property type="project" value="InterPro"/>
</dbReference>
<dbReference type="GO" id="GO:0003735">
    <property type="term" value="F:structural constituent of ribosome"/>
    <property type="evidence" value="ECO:0007669"/>
    <property type="project" value="InterPro"/>
</dbReference>
<dbReference type="GO" id="GO:0000027">
    <property type="term" value="P:ribosomal large subunit assembly"/>
    <property type="evidence" value="ECO:0007669"/>
    <property type="project" value="TreeGrafter"/>
</dbReference>
<dbReference type="GO" id="GO:0006412">
    <property type="term" value="P:translation"/>
    <property type="evidence" value="ECO:0007669"/>
    <property type="project" value="UniProtKB-UniRule"/>
</dbReference>
<dbReference type="CDD" id="cd00432">
    <property type="entry name" value="Ribosomal_L18_L5e"/>
    <property type="match status" value="1"/>
</dbReference>
<dbReference type="Gene3D" id="3.30.420.100">
    <property type="match status" value="1"/>
</dbReference>
<dbReference type="HAMAP" id="MF_01337_A">
    <property type="entry name" value="Ribosomal_uL18_A"/>
    <property type="match status" value="1"/>
</dbReference>
<dbReference type="InterPro" id="IPR005485">
    <property type="entry name" value="Rbsml_uL18_euk"/>
</dbReference>
<dbReference type="NCBIfam" id="NF006342">
    <property type="entry name" value="PRK08569.1"/>
    <property type="match status" value="1"/>
</dbReference>
<dbReference type="PANTHER" id="PTHR23410:SF12">
    <property type="entry name" value="LARGE RIBOSOMAL SUBUNIT PROTEIN UL18"/>
    <property type="match status" value="1"/>
</dbReference>
<dbReference type="PANTHER" id="PTHR23410">
    <property type="entry name" value="RIBOSOMAL PROTEIN L5-RELATED"/>
    <property type="match status" value="1"/>
</dbReference>
<dbReference type="Pfam" id="PF17144">
    <property type="entry name" value="Ribosomal_L5e"/>
    <property type="match status" value="1"/>
</dbReference>
<dbReference type="SUPFAM" id="SSF53137">
    <property type="entry name" value="Translational machinery components"/>
    <property type="match status" value="1"/>
</dbReference>
<proteinExistence type="inferred from homology"/>
<sequence>MISMVFKRKEAGITDYSKRLKLLKSREKRFIVRITGKGVIAQVAEYSDIGDRILFTVTDKTLAKYGVDLRGNNIQVCYLVGYIAGIESEKNGVESAVLDTGRRKFRKGGRIAACLKGFTDAGIEVPHGEDVFPDKKRIDGKHLKSPVKISEIVKNFKKMEEKA</sequence>
<keyword id="KW-1185">Reference proteome</keyword>
<keyword id="KW-0687">Ribonucleoprotein</keyword>
<keyword id="KW-0689">Ribosomal protein</keyword>
<keyword id="KW-0694">RNA-binding</keyword>
<keyword id="KW-0699">rRNA-binding</keyword>
<evidence type="ECO:0000255" key="1">
    <source>
        <dbReference type="HAMAP-Rule" id="MF_01337"/>
    </source>
</evidence>
<evidence type="ECO:0000305" key="2"/>
<comment type="function">
    <text evidence="1">This is one of the proteins that bind and probably mediate the attachment of the 5S RNA into the large ribosomal subunit, where it forms part of the central protuberance.</text>
</comment>
<comment type="subunit">
    <text evidence="1">Part of the 50S ribosomal subunit. Contacts the 5S and 23S rRNAs.</text>
</comment>
<comment type="similarity">
    <text evidence="1">Belongs to the universal ribosomal protein uL18 family.</text>
</comment>